<reference evidence="6" key="1">
    <citation type="journal article" date="2006" name="PLoS Biol.">
        <title>Macronuclear genome sequence of the ciliate Tetrahymena thermophila, a model eukaryote.</title>
        <authorList>
            <person name="Eisen J.A."/>
            <person name="Coyne R.S."/>
            <person name="Wu M."/>
            <person name="Wu D."/>
            <person name="Thiagarajan M."/>
            <person name="Wortman J.R."/>
            <person name="Badger J.H."/>
            <person name="Ren Q."/>
            <person name="Amedeo P."/>
            <person name="Jones K.M."/>
            <person name="Tallon L.J."/>
            <person name="Delcher A.L."/>
            <person name="Salzberg S.L."/>
            <person name="Silva J.C."/>
            <person name="Haas B.J."/>
            <person name="Majoros W.H."/>
            <person name="Farzad M."/>
            <person name="Carlton J.M."/>
            <person name="Smith R.K. Jr."/>
            <person name="Garg J."/>
            <person name="Pearlman R.E."/>
            <person name="Karrer K.M."/>
            <person name="Sun L."/>
            <person name="Manning G."/>
            <person name="Elde N.C."/>
            <person name="Turkewitz A.P."/>
            <person name="Asai D.J."/>
            <person name="Wilkes D.E."/>
            <person name="Wang Y."/>
            <person name="Cai H."/>
            <person name="Collins K."/>
            <person name="Stewart B.A."/>
            <person name="Lee S.R."/>
            <person name="Wilamowska K."/>
            <person name="Weinberg Z."/>
            <person name="Ruzzo W.L."/>
            <person name="Wloga D."/>
            <person name="Gaertig J."/>
            <person name="Frankel J."/>
            <person name="Tsao C.-C."/>
            <person name="Gorovsky M.A."/>
            <person name="Keeling P.J."/>
            <person name="Waller R.F."/>
            <person name="Patron N.J."/>
            <person name="Cherry J.M."/>
            <person name="Stover N.A."/>
            <person name="Krieger C.J."/>
            <person name="del Toro C."/>
            <person name="Ryder H.F."/>
            <person name="Williamson S.C."/>
            <person name="Barbeau R.A."/>
            <person name="Hamilton E.P."/>
            <person name="Orias E."/>
        </authorList>
    </citation>
    <scope>NUCLEOTIDE SEQUENCE [LARGE SCALE GENOMIC DNA]</scope>
    <source>
        <strain evidence="6">SB210</strain>
    </source>
</reference>
<reference key="2">
    <citation type="journal article" date="2023" name="Nat. Commun.">
        <title>Integrated modeling of the Nexin-dynein regulatory complex reveals its regulatory mechanism.</title>
        <authorList>
            <person name="Ghanaeian A."/>
            <person name="Majhi S."/>
            <person name="McCafferty C.L."/>
            <person name="Nami B."/>
            <person name="Black C.S."/>
            <person name="Yang S.K."/>
            <person name="Legal T."/>
            <person name="Papoulas O."/>
            <person name="Janowska M."/>
            <person name="Valente-Paterno M."/>
            <person name="Marcotte E.M."/>
            <person name="Wloga D."/>
            <person name="Bui K.H."/>
        </authorList>
    </citation>
    <scope>FUNCTION</scope>
    <scope>SUBUNIT</scope>
    <scope>SUBCELLULAR LOCATION</scope>
</reference>
<comment type="function">
    <text evidence="2">Component of the nexin-dynein regulatory complex (N-DRC), a key regulator of ciliary/flagellar motility which maintains the alignment and integrity of the distal axoneme and regulates microtubule sliding in motile axonemes.</text>
</comment>
<comment type="subunit">
    <text evidence="2">Component of the nexin-dynein regulatory complex (N-DRC).</text>
</comment>
<comment type="subcellular location">
    <subcellularLocation>
        <location evidence="4">Cytoplasm</location>
        <location evidence="4">Cytoskeleton</location>
        <location evidence="4">Flagellum axoneme</location>
    </subcellularLocation>
</comment>
<comment type="similarity">
    <text evidence="3">Belongs to the DRC12 family.</text>
</comment>
<keyword id="KW-0002">3D-structure</keyword>
<keyword id="KW-0966">Cell projection</keyword>
<keyword id="KW-0969">Cilium</keyword>
<keyword id="KW-0175">Coiled coil</keyword>
<keyword id="KW-0963">Cytoplasm</keyword>
<keyword id="KW-0206">Cytoskeleton</keyword>
<keyword id="KW-0282">Flagellum</keyword>
<keyword id="KW-1185">Reference proteome</keyword>
<proteinExistence type="evidence at protein level"/>
<organism evidence="5 6">
    <name type="scientific">Tetrahymena thermophila (strain SB210)</name>
    <dbReference type="NCBI Taxonomy" id="312017"/>
    <lineage>
        <taxon>Eukaryota</taxon>
        <taxon>Sar</taxon>
        <taxon>Alveolata</taxon>
        <taxon>Ciliophora</taxon>
        <taxon>Intramacronucleata</taxon>
        <taxon>Oligohymenophorea</taxon>
        <taxon>Hymenostomatida</taxon>
        <taxon>Tetrahymenina</taxon>
        <taxon>Tetrahymenidae</taxon>
        <taxon>Tetrahymena</taxon>
    </lineage>
</organism>
<protein>
    <recommendedName>
        <fullName>Dynein regulatory complex protein 12</fullName>
    </recommendedName>
    <alternativeName>
        <fullName>Coiled-coil domain-containing protein 153</fullName>
    </alternativeName>
</protein>
<feature type="chain" id="PRO_0000460218" description="Dynein regulatory complex protein 12">
    <location>
        <begin position="1"/>
        <end position="187"/>
    </location>
</feature>
<feature type="region of interest" description="Disordered" evidence="1">
    <location>
        <begin position="1"/>
        <end position="23"/>
    </location>
</feature>
<feature type="compositionally biased region" description="Basic and acidic residues" evidence="1">
    <location>
        <begin position="10"/>
        <end position="23"/>
    </location>
</feature>
<accession>Q22RH5</accession>
<sequence length="187" mass="22129">MSKKSGKGKGKNDGDELGAEKEQVLRTKVESLIQRLGHEQERADRAKAAENELRARLFDLDKDFKNEKDRLFSITSDMTRQYKQMQDELLNQVNDLNKTVIEKDEEIKKKDQQIQDMTKDYEYKLKKKDDEIQDLKRKIEEMSAEFAKMLKDTLDKMQERIEMVQWDSDTDPQMMKRLKDMTGLSNN</sequence>
<evidence type="ECO:0000256" key="1">
    <source>
        <dbReference type="SAM" id="MobiDB-lite"/>
    </source>
</evidence>
<evidence type="ECO:0000269" key="2">
    <source>
    </source>
</evidence>
<evidence type="ECO:0000305" key="3"/>
<evidence type="ECO:0000305" key="4">
    <source>
    </source>
</evidence>
<evidence type="ECO:0000312" key="5">
    <source>
        <dbReference type="EMBL" id="EAR88147.2"/>
    </source>
</evidence>
<evidence type="ECO:0000312" key="6">
    <source>
        <dbReference type="Proteomes" id="UP000009168"/>
    </source>
</evidence>
<gene>
    <name type="primary">DRC12</name>
    <name evidence="5" type="ORF">TTHERM_00016120</name>
</gene>
<name>DRC12_TETTS</name>
<dbReference type="EMBL" id="GG662845">
    <property type="protein sequence ID" value="EAR88147.2"/>
    <property type="molecule type" value="Genomic_DNA"/>
</dbReference>
<dbReference type="RefSeq" id="XP_001008392.2">
    <property type="nucleotide sequence ID" value="XM_001008392.3"/>
</dbReference>
<dbReference type="PDB" id="8TH8">
    <property type="method" value="EM"/>
    <property type="resolution" value="7.40 A"/>
    <property type="chains" value="S/s=1-187"/>
</dbReference>
<dbReference type="PDB" id="8TID">
    <property type="method" value="EM"/>
    <property type="resolution" value="3.60 A"/>
    <property type="chains" value="S/s=1-187"/>
</dbReference>
<dbReference type="PDBsum" id="8TH8"/>
<dbReference type="PDBsum" id="8TID"/>
<dbReference type="EMDB" id="EMD-41251"/>
<dbReference type="EMDB" id="EMD-41284"/>
<dbReference type="SMR" id="Q22RH5"/>
<dbReference type="EnsemblProtists" id="EAR88147">
    <property type="protein sequence ID" value="EAR88147"/>
    <property type="gene ID" value="TTHERM_00016120"/>
</dbReference>
<dbReference type="GeneID" id="7826841"/>
<dbReference type="KEGG" id="tet:TTHERM_00016120"/>
<dbReference type="eggNOG" id="ENOG502R2K2">
    <property type="taxonomic scope" value="Eukaryota"/>
</dbReference>
<dbReference type="HOGENOM" id="CLU_088442_1_1_1"/>
<dbReference type="InParanoid" id="Q22RH5"/>
<dbReference type="OMA" id="HAKYKEQ"/>
<dbReference type="OrthoDB" id="10264405at2759"/>
<dbReference type="Proteomes" id="UP000009168">
    <property type="component" value="Unassembled WGS sequence"/>
</dbReference>
<dbReference type="GO" id="GO:0005737">
    <property type="term" value="C:cytoplasm"/>
    <property type="evidence" value="ECO:0007669"/>
    <property type="project" value="UniProtKB-KW"/>
</dbReference>
<dbReference type="GO" id="GO:0005856">
    <property type="term" value="C:cytoskeleton"/>
    <property type="evidence" value="ECO:0007669"/>
    <property type="project" value="UniProtKB-KW"/>
</dbReference>
<dbReference type="GO" id="GO:0031514">
    <property type="term" value="C:motile cilium"/>
    <property type="evidence" value="ECO:0007669"/>
    <property type="project" value="UniProtKB-KW"/>
</dbReference>
<dbReference type="InterPro" id="IPR033585">
    <property type="entry name" value="DRC12-like"/>
</dbReference>
<dbReference type="PANTHER" id="PTHR28656">
    <property type="entry name" value="COILED-COIL DOMAIN-CONTAINING PROTEIN 153"/>
    <property type="match status" value="1"/>
</dbReference>
<dbReference type="PANTHER" id="PTHR28656:SF1">
    <property type="entry name" value="COILED-COIL DOMAIN-CONTAINING PROTEIN 153"/>
    <property type="match status" value="1"/>
</dbReference>